<feature type="chain" id="PRO_0000101280" description="5'-3' exonuclease">
    <location>
        <begin position="1"/>
        <end position="289"/>
    </location>
</feature>
<feature type="domain" description="5'-3' exonuclease" evidence="2">
    <location>
        <begin position="166"/>
        <end position="256"/>
    </location>
</feature>
<organism>
    <name type="scientific">Aquifex aeolicus (strain VF5)</name>
    <dbReference type="NCBI Taxonomy" id="224324"/>
    <lineage>
        <taxon>Bacteria</taxon>
        <taxon>Pseudomonadati</taxon>
        <taxon>Aquificota</taxon>
        <taxon>Aquificia</taxon>
        <taxon>Aquificales</taxon>
        <taxon>Aquificaceae</taxon>
        <taxon>Aquifex</taxon>
    </lineage>
</organism>
<gene>
    <name type="ordered locus">aq_1628</name>
</gene>
<sequence length="289" mass="33322">MKTLYILDGSSFVYRSFFALPPLSTSKGFPTNAIYGFLRMLFSLIKKERPQYLVVVFDAPAKTKREKIYADYKKQRPKAPDPLKVQIPVIKEILKLAGIPLLELPGYEADDVIAYLAEKFSQKGFKVKIYSPDKDLLQLVSENVLVINPMNDEVFTKERVIKKFGVEPQKIPDYLALVGDKVDNVPGIEGVGPKTAINILKKYGSVENILKNWEKFQREFPRAKKEDLELSYKLVKLYTDLDIELSEEDLKIKRPDLNKLKQKLQELEMKSLLKEVDKIFRQASQRSLF</sequence>
<evidence type="ECO:0000250" key="1"/>
<evidence type="ECO:0000255" key="2"/>
<comment type="function">
    <text evidence="1">5'-3' exonuclease acting preferentially on double-stranded DNA.</text>
</comment>
<reference key="1">
    <citation type="journal article" date="1998" name="Nature">
        <title>The complete genome of the hyperthermophilic bacterium Aquifex aeolicus.</title>
        <authorList>
            <person name="Deckert G."/>
            <person name="Warren P.V."/>
            <person name="Gaasterland T."/>
            <person name="Young W.G."/>
            <person name="Lenox A.L."/>
            <person name="Graham D.E."/>
            <person name="Overbeek R."/>
            <person name="Snead M.A."/>
            <person name="Keller M."/>
            <person name="Aujay M."/>
            <person name="Huber R."/>
            <person name="Feldman R.A."/>
            <person name="Short J.M."/>
            <person name="Olsen G.J."/>
            <person name="Swanson R.V."/>
        </authorList>
    </citation>
    <scope>NUCLEOTIDE SEQUENCE [LARGE SCALE GENOMIC DNA]</scope>
    <source>
        <strain>VF5</strain>
    </source>
</reference>
<protein>
    <recommendedName>
        <fullName>5'-3' exonuclease</fullName>
        <ecNumber>3.1.11.-</ecNumber>
    </recommendedName>
</protein>
<name>EX53_AQUAE</name>
<proteinExistence type="inferred from homology"/>
<dbReference type="EC" id="3.1.11.-"/>
<dbReference type="EMBL" id="AE000657">
    <property type="protein sequence ID" value="AAC07515.1"/>
    <property type="molecule type" value="Genomic_DNA"/>
</dbReference>
<dbReference type="PIR" id="D70440">
    <property type="entry name" value="D70440"/>
</dbReference>
<dbReference type="RefSeq" id="NP_214115.1">
    <property type="nucleotide sequence ID" value="NC_000918.1"/>
</dbReference>
<dbReference type="RefSeq" id="WP_010881053.1">
    <property type="nucleotide sequence ID" value="NC_000918.1"/>
</dbReference>
<dbReference type="SMR" id="O67550"/>
<dbReference type="FunCoup" id="O67550">
    <property type="interactions" value="110"/>
</dbReference>
<dbReference type="STRING" id="224324.aq_1628"/>
<dbReference type="EnsemblBacteria" id="AAC07515">
    <property type="protein sequence ID" value="AAC07515"/>
    <property type="gene ID" value="aq_1628"/>
</dbReference>
<dbReference type="KEGG" id="aae:aq_1628"/>
<dbReference type="eggNOG" id="COG0258">
    <property type="taxonomic scope" value="Bacteria"/>
</dbReference>
<dbReference type="HOGENOM" id="CLU_004675_1_0_0"/>
<dbReference type="InParanoid" id="O67550"/>
<dbReference type="OrthoDB" id="9806424at2"/>
<dbReference type="Proteomes" id="UP000000798">
    <property type="component" value="Chromosome"/>
</dbReference>
<dbReference type="GO" id="GO:0008409">
    <property type="term" value="F:5'-3' exonuclease activity"/>
    <property type="evidence" value="ECO:0007669"/>
    <property type="project" value="InterPro"/>
</dbReference>
<dbReference type="GO" id="GO:0017108">
    <property type="term" value="F:5'-flap endonuclease activity"/>
    <property type="evidence" value="ECO:0007669"/>
    <property type="project" value="InterPro"/>
</dbReference>
<dbReference type="GO" id="GO:0003677">
    <property type="term" value="F:DNA binding"/>
    <property type="evidence" value="ECO:0007669"/>
    <property type="project" value="UniProtKB-KW"/>
</dbReference>
<dbReference type="GO" id="GO:0033567">
    <property type="term" value="P:DNA replication, Okazaki fragment processing"/>
    <property type="evidence" value="ECO:0007669"/>
    <property type="project" value="InterPro"/>
</dbReference>
<dbReference type="CDD" id="cd09898">
    <property type="entry name" value="H3TH_53EXO"/>
    <property type="match status" value="1"/>
</dbReference>
<dbReference type="CDD" id="cd09859">
    <property type="entry name" value="PIN_53EXO"/>
    <property type="match status" value="1"/>
</dbReference>
<dbReference type="FunFam" id="1.10.150.20:FF:000003">
    <property type="entry name" value="DNA polymerase I"/>
    <property type="match status" value="1"/>
</dbReference>
<dbReference type="FunFam" id="3.40.50.1010:FF:000001">
    <property type="entry name" value="DNA polymerase I"/>
    <property type="match status" value="1"/>
</dbReference>
<dbReference type="Gene3D" id="1.10.150.20">
    <property type="entry name" value="5' to 3' exonuclease, C-terminal subdomain"/>
    <property type="match status" value="1"/>
</dbReference>
<dbReference type="Gene3D" id="3.40.50.1010">
    <property type="entry name" value="5'-nuclease"/>
    <property type="match status" value="1"/>
</dbReference>
<dbReference type="InterPro" id="IPR020046">
    <property type="entry name" value="5-3_exonucl_a-hlix_arch_N"/>
</dbReference>
<dbReference type="InterPro" id="IPR002421">
    <property type="entry name" value="5-3_exonuclease"/>
</dbReference>
<dbReference type="InterPro" id="IPR036279">
    <property type="entry name" value="5-3_exonuclease_C_sf"/>
</dbReference>
<dbReference type="InterPro" id="IPR020045">
    <property type="entry name" value="DNA_polI_H3TH"/>
</dbReference>
<dbReference type="InterPro" id="IPR038969">
    <property type="entry name" value="FEN"/>
</dbReference>
<dbReference type="InterPro" id="IPR008918">
    <property type="entry name" value="HhH2"/>
</dbReference>
<dbReference type="InterPro" id="IPR029060">
    <property type="entry name" value="PIN-like_dom_sf"/>
</dbReference>
<dbReference type="PANTHER" id="PTHR42646:SF2">
    <property type="entry name" value="5'-3' EXONUCLEASE FAMILY PROTEIN"/>
    <property type="match status" value="1"/>
</dbReference>
<dbReference type="PANTHER" id="PTHR42646">
    <property type="entry name" value="FLAP ENDONUCLEASE XNI"/>
    <property type="match status" value="1"/>
</dbReference>
<dbReference type="Pfam" id="PF01367">
    <property type="entry name" value="5_3_exonuc"/>
    <property type="match status" value="1"/>
</dbReference>
<dbReference type="Pfam" id="PF02739">
    <property type="entry name" value="5_3_exonuc_N"/>
    <property type="match status" value="1"/>
</dbReference>
<dbReference type="SMART" id="SM00475">
    <property type="entry name" value="53EXOc"/>
    <property type="match status" value="1"/>
</dbReference>
<dbReference type="SMART" id="SM00279">
    <property type="entry name" value="HhH2"/>
    <property type="match status" value="1"/>
</dbReference>
<dbReference type="SUPFAM" id="SSF47807">
    <property type="entry name" value="5' to 3' exonuclease, C-terminal subdomain"/>
    <property type="match status" value="1"/>
</dbReference>
<dbReference type="SUPFAM" id="SSF88723">
    <property type="entry name" value="PIN domain-like"/>
    <property type="match status" value="1"/>
</dbReference>
<keyword id="KW-0238">DNA-binding</keyword>
<keyword id="KW-0269">Exonuclease</keyword>
<keyword id="KW-0378">Hydrolase</keyword>
<keyword id="KW-0540">Nuclease</keyword>
<keyword id="KW-1185">Reference proteome</keyword>
<accession>O67550</accession>